<organism>
    <name type="scientific">Escherichia coli O6:H1 (strain CFT073 / ATCC 700928 / UPEC)</name>
    <dbReference type="NCBI Taxonomy" id="199310"/>
    <lineage>
        <taxon>Bacteria</taxon>
        <taxon>Pseudomonadati</taxon>
        <taxon>Pseudomonadota</taxon>
        <taxon>Gammaproteobacteria</taxon>
        <taxon>Enterobacterales</taxon>
        <taxon>Enterobacteriaceae</taxon>
        <taxon>Escherichia</taxon>
    </lineage>
</organism>
<accession>P0AAW2</accession>
<accession>P75772</accession>
<sequence length="253" mass="28790">MPDQTQQFSFKVLTINIHKGFTAFNRRFILPELRDAVRTVSADIVCLQEVMGAHEVHPLHVENWPDTSHYEFLADTMWSDFAYGRNAVYPEGHHGNAVLSRYPIEHYENRDVSVDGAEKRGVLYCRIVPPMTGKAIHVMCVHLGLREAHRQAQLAMLAEWVNELPDGEPVLVAGDFNDWRQKANHPLKVQAGLDEIFTRAHGRPARTFPVQFPLLRLDRIYVKNASASAPTALPLRTWRHLSDHAPLSAEIHL</sequence>
<feature type="chain" id="PRO_0000168718" description="Uncharacterized protein YbhP">
    <location>
        <begin position="1"/>
        <end position="253"/>
    </location>
</feature>
<proteinExistence type="predicted"/>
<protein>
    <recommendedName>
        <fullName>Uncharacterized protein YbhP</fullName>
    </recommendedName>
</protein>
<keyword id="KW-1185">Reference proteome</keyword>
<dbReference type="EMBL" id="AE014075">
    <property type="protein sequence ID" value="AAN79346.1"/>
    <property type="molecule type" value="Genomic_DNA"/>
</dbReference>
<dbReference type="RefSeq" id="WP_001113348.1">
    <property type="nucleotide sequence ID" value="NZ_CP051263.1"/>
</dbReference>
<dbReference type="SMR" id="P0AAW2"/>
<dbReference type="STRING" id="199310.c0873"/>
<dbReference type="KEGG" id="ecc:c0873"/>
<dbReference type="eggNOG" id="COG3568">
    <property type="taxonomic scope" value="Bacteria"/>
</dbReference>
<dbReference type="HOGENOM" id="CLU_060500_3_2_6"/>
<dbReference type="BioCyc" id="ECOL199310:C0873-MONOMER"/>
<dbReference type="Proteomes" id="UP000001410">
    <property type="component" value="Chromosome"/>
</dbReference>
<dbReference type="GO" id="GO:0016020">
    <property type="term" value="C:membrane"/>
    <property type="evidence" value="ECO:0007669"/>
    <property type="project" value="GOC"/>
</dbReference>
<dbReference type="GO" id="GO:0003824">
    <property type="term" value="F:catalytic activity"/>
    <property type="evidence" value="ECO:0007669"/>
    <property type="project" value="InterPro"/>
</dbReference>
<dbReference type="GO" id="GO:0006506">
    <property type="term" value="P:GPI anchor biosynthetic process"/>
    <property type="evidence" value="ECO:0007669"/>
    <property type="project" value="TreeGrafter"/>
</dbReference>
<dbReference type="FunFam" id="3.60.10.10:FF:000020">
    <property type="entry name" value="Endonuclease/exonuclease/phosphatase family protein"/>
    <property type="match status" value="1"/>
</dbReference>
<dbReference type="Gene3D" id="3.60.10.10">
    <property type="entry name" value="Endonuclease/exonuclease/phosphatase"/>
    <property type="match status" value="1"/>
</dbReference>
<dbReference type="InterPro" id="IPR036691">
    <property type="entry name" value="Endo/exonu/phosph_ase_sf"/>
</dbReference>
<dbReference type="InterPro" id="IPR005135">
    <property type="entry name" value="Endo/exonuclease/phosphatase"/>
</dbReference>
<dbReference type="InterPro" id="IPR051916">
    <property type="entry name" value="GPI-anchor_lipid_remodeler"/>
</dbReference>
<dbReference type="PANTHER" id="PTHR14859">
    <property type="entry name" value="CALCOFLUOR WHITE HYPERSENSITIVE PROTEIN PRECURSOR"/>
    <property type="match status" value="1"/>
</dbReference>
<dbReference type="PANTHER" id="PTHR14859:SF15">
    <property type="entry name" value="ENDONUCLEASE_EXONUCLEASE_PHOSPHATASE DOMAIN-CONTAINING PROTEIN"/>
    <property type="match status" value="1"/>
</dbReference>
<dbReference type="Pfam" id="PF03372">
    <property type="entry name" value="Exo_endo_phos"/>
    <property type="match status" value="1"/>
</dbReference>
<dbReference type="SUPFAM" id="SSF56219">
    <property type="entry name" value="DNase I-like"/>
    <property type="match status" value="1"/>
</dbReference>
<name>YBHP_ECOL6</name>
<reference key="1">
    <citation type="journal article" date="2002" name="Proc. Natl. Acad. Sci. U.S.A.">
        <title>Extensive mosaic structure revealed by the complete genome sequence of uropathogenic Escherichia coli.</title>
        <authorList>
            <person name="Welch R.A."/>
            <person name="Burland V."/>
            <person name="Plunkett G. III"/>
            <person name="Redford P."/>
            <person name="Roesch P."/>
            <person name="Rasko D."/>
            <person name="Buckles E.L."/>
            <person name="Liou S.-R."/>
            <person name="Boutin A."/>
            <person name="Hackett J."/>
            <person name="Stroud D."/>
            <person name="Mayhew G.F."/>
            <person name="Rose D.J."/>
            <person name="Zhou S."/>
            <person name="Schwartz D.C."/>
            <person name="Perna N.T."/>
            <person name="Mobley H.L.T."/>
            <person name="Donnenberg M.S."/>
            <person name="Blattner F.R."/>
        </authorList>
    </citation>
    <scope>NUCLEOTIDE SEQUENCE [LARGE SCALE GENOMIC DNA]</scope>
    <source>
        <strain>CFT073 / ATCC 700928 / UPEC</strain>
    </source>
</reference>
<gene>
    <name type="primary">ybhP</name>
    <name type="ordered locus">c0873</name>
</gene>